<name>PURQ_METBF</name>
<protein>
    <recommendedName>
        <fullName evidence="1">Phosphoribosylformylglycinamidine synthase subunit PurQ</fullName>
        <shortName evidence="1">FGAM synthase</shortName>
        <ecNumber evidence="1">6.3.5.3</ecNumber>
    </recommendedName>
    <alternativeName>
        <fullName evidence="1">Formylglycinamide ribonucleotide amidotransferase subunit I</fullName>
        <shortName evidence="1">FGAR amidotransferase I</shortName>
        <shortName evidence="1">FGAR-AT I</shortName>
    </alternativeName>
    <alternativeName>
        <fullName evidence="1">Glutaminase PurQ</fullName>
        <ecNumber evidence="1">3.5.1.2</ecNumber>
    </alternativeName>
    <alternativeName>
        <fullName evidence="1">Phosphoribosylformylglycinamidine synthase subunit I</fullName>
    </alternativeName>
</protein>
<comment type="function">
    <text evidence="1">Part of the phosphoribosylformylglycinamidine synthase complex involved in the purines biosynthetic pathway. Catalyzes the ATP-dependent conversion of formylglycinamide ribonucleotide (FGAR) and glutamine to yield formylglycinamidine ribonucleotide (FGAM) and glutamate. The FGAM synthase complex is composed of three subunits. PurQ produces an ammonia molecule by converting glutamine to glutamate. PurL transfers the ammonia molecule to FGAR to form FGAM in an ATP-dependent manner. PurS interacts with PurQ and PurL and is thought to assist in the transfer of the ammonia molecule from PurQ to PurL.</text>
</comment>
<comment type="catalytic activity">
    <reaction evidence="1">
        <text>N(2)-formyl-N(1)-(5-phospho-beta-D-ribosyl)glycinamide + L-glutamine + ATP + H2O = 2-formamido-N(1)-(5-O-phospho-beta-D-ribosyl)acetamidine + L-glutamate + ADP + phosphate + H(+)</text>
        <dbReference type="Rhea" id="RHEA:17129"/>
        <dbReference type="ChEBI" id="CHEBI:15377"/>
        <dbReference type="ChEBI" id="CHEBI:15378"/>
        <dbReference type="ChEBI" id="CHEBI:29985"/>
        <dbReference type="ChEBI" id="CHEBI:30616"/>
        <dbReference type="ChEBI" id="CHEBI:43474"/>
        <dbReference type="ChEBI" id="CHEBI:58359"/>
        <dbReference type="ChEBI" id="CHEBI:147286"/>
        <dbReference type="ChEBI" id="CHEBI:147287"/>
        <dbReference type="ChEBI" id="CHEBI:456216"/>
        <dbReference type="EC" id="6.3.5.3"/>
    </reaction>
</comment>
<comment type="catalytic activity">
    <reaction evidence="1">
        <text>L-glutamine + H2O = L-glutamate + NH4(+)</text>
        <dbReference type="Rhea" id="RHEA:15889"/>
        <dbReference type="ChEBI" id="CHEBI:15377"/>
        <dbReference type="ChEBI" id="CHEBI:28938"/>
        <dbReference type="ChEBI" id="CHEBI:29985"/>
        <dbReference type="ChEBI" id="CHEBI:58359"/>
        <dbReference type="EC" id="3.5.1.2"/>
    </reaction>
</comment>
<comment type="pathway">
    <text evidence="1">Purine metabolism; IMP biosynthesis via de novo pathway; 5-amino-1-(5-phospho-D-ribosyl)imidazole from N(2)-formyl-N(1)-(5-phospho-D-ribosyl)glycinamide: step 1/2.</text>
</comment>
<comment type="subunit">
    <text evidence="1">Part of the FGAM synthase complex composed of 1 PurL, 1 PurQ and 2 PurS subunits.</text>
</comment>
<comment type="subcellular location">
    <subcellularLocation>
        <location evidence="1">Cytoplasm</location>
    </subcellularLocation>
</comment>
<dbReference type="EC" id="6.3.5.3" evidence="1"/>
<dbReference type="EC" id="3.5.1.2" evidence="1"/>
<dbReference type="EMBL" id="CP000099">
    <property type="protein sequence ID" value="AAZ71658.1"/>
    <property type="molecule type" value="Genomic_DNA"/>
</dbReference>
<dbReference type="SMR" id="Q468N4"/>
<dbReference type="STRING" id="269797.Mbar_A2755"/>
<dbReference type="PaxDb" id="269797-Mbar_A2755"/>
<dbReference type="KEGG" id="mba:Mbar_A2755"/>
<dbReference type="eggNOG" id="arCOG00102">
    <property type="taxonomic scope" value="Archaea"/>
</dbReference>
<dbReference type="HOGENOM" id="CLU_001031_3_1_2"/>
<dbReference type="OrthoDB" id="6486at2157"/>
<dbReference type="UniPathway" id="UPA00074">
    <property type="reaction ID" value="UER00128"/>
</dbReference>
<dbReference type="GO" id="GO:0005737">
    <property type="term" value="C:cytoplasm"/>
    <property type="evidence" value="ECO:0007669"/>
    <property type="project" value="UniProtKB-SubCell"/>
</dbReference>
<dbReference type="GO" id="GO:0005524">
    <property type="term" value="F:ATP binding"/>
    <property type="evidence" value="ECO:0007669"/>
    <property type="project" value="UniProtKB-KW"/>
</dbReference>
<dbReference type="GO" id="GO:0004359">
    <property type="term" value="F:glutaminase activity"/>
    <property type="evidence" value="ECO:0007669"/>
    <property type="project" value="UniProtKB-EC"/>
</dbReference>
<dbReference type="GO" id="GO:0004642">
    <property type="term" value="F:phosphoribosylformylglycinamidine synthase activity"/>
    <property type="evidence" value="ECO:0007669"/>
    <property type="project" value="UniProtKB-UniRule"/>
</dbReference>
<dbReference type="GO" id="GO:0006189">
    <property type="term" value="P:'de novo' IMP biosynthetic process"/>
    <property type="evidence" value="ECO:0007669"/>
    <property type="project" value="UniProtKB-UniRule"/>
</dbReference>
<dbReference type="CDD" id="cd01740">
    <property type="entry name" value="GATase1_FGAR_AT"/>
    <property type="match status" value="1"/>
</dbReference>
<dbReference type="Gene3D" id="3.40.50.880">
    <property type="match status" value="1"/>
</dbReference>
<dbReference type="HAMAP" id="MF_00421">
    <property type="entry name" value="PurQ"/>
    <property type="match status" value="1"/>
</dbReference>
<dbReference type="InterPro" id="IPR029062">
    <property type="entry name" value="Class_I_gatase-like"/>
</dbReference>
<dbReference type="InterPro" id="IPR010075">
    <property type="entry name" value="PRibForGlyAmidine_synth_PurQ"/>
</dbReference>
<dbReference type="NCBIfam" id="TIGR01737">
    <property type="entry name" value="FGAM_synth_I"/>
    <property type="match status" value="1"/>
</dbReference>
<dbReference type="NCBIfam" id="NF002957">
    <property type="entry name" value="PRK03619.1"/>
    <property type="match status" value="1"/>
</dbReference>
<dbReference type="PANTHER" id="PTHR47552">
    <property type="entry name" value="PHOSPHORIBOSYLFORMYLGLYCINAMIDINE SYNTHASE SUBUNIT PURQ"/>
    <property type="match status" value="1"/>
</dbReference>
<dbReference type="PANTHER" id="PTHR47552:SF1">
    <property type="entry name" value="PHOSPHORIBOSYLFORMYLGLYCINAMIDINE SYNTHASE SUBUNIT PURQ"/>
    <property type="match status" value="1"/>
</dbReference>
<dbReference type="Pfam" id="PF13507">
    <property type="entry name" value="GATase_5"/>
    <property type="match status" value="1"/>
</dbReference>
<dbReference type="PIRSF" id="PIRSF001586">
    <property type="entry name" value="FGAM_synth_I"/>
    <property type="match status" value="1"/>
</dbReference>
<dbReference type="SMART" id="SM01211">
    <property type="entry name" value="GATase_5"/>
    <property type="match status" value="1"/>
</dbReference>
<dbReference type="SUPFAM" id="SSF52317">
    <property type="entry name" value="Class I glutamine amidotransferase-like"/>
    <property type="match status" value="1"/>
</dbReference>
<dbReference type="PROSITE" id="PS51273">
    <property type="entry name" value="GATASE_TYPE_1"/>
    <property type="match status" value="1"/>
</dbReference>
<sequence length="232" mass="25732">MKIAILQFGGTNCDQDVLHVLKDVVGVDAETVWYKQEDLTGFDGVVVPGGFSYGDYLRAGAIAARTPIMNSVKKLAAEGKPVLGICNGFQILTEARVLEGALTTNEYPKFRCHWTNLRVETVDTPFTSKFRKGEVIRMPIAHMEGQFYAEEKTLAELDENEQVVFRYVDENGKVTDEANPNGSLENIAGIVNTSRNIFGLMPHPERASESILGSDDGLRVFESMVDYITENF</sequence>
<accession>Q468N4</accession>
<reference key="1">
    <citation type="journal article" date="2006" name="J. Bacteriol.">
        <title>The Methanosarcina barkeri genome: comparative analysis with Methanosarcina acetivorans and Methanosarcina mazei reveals extensive rearrangement within methanosarcinal genomes.</title>
        <authorList>
            <person name="Maeder D.L."/>
            <person name="Anderson I."/>
            <person name="Brettin T.S."/>
            <person name="Bruce D.C."/>
            <person name="Gilna P."/>
            <person name="Han C.S."/>
            <person name="Lapidus A."/>
            <person name="Metcalf W.W."/>
            <person name="Saunders E."/>
            <person name="Tapia R."/>
            <person name="Sowers K.R."/>
        </authorList>
    </citation>
    <scope>NUCLEOTIDE SEQUENCE [LARGE SCALE GENOMIC DNA]</scope>
    <source>
        <strain>Fusaro / DSM 804</strain>
    </source>
</reference>
<feature type="chain" id="PRO_0000252744" description="Phosphoribosylformylglycinamidine synthase subunit PurQ">
    <location>
        <begin position="1"/>
        <end position="232"/>
    </location>
</feature>
<feature type="domain" description="Glutamine amidotransferase type-1" evidence="1">
    <location>
        <begin position="2"/>
        <end position="232"/>
    </location>
</feature>
<feature type="active site" description="Nucleophile" evidence="1">
    <location>
        <position position="86"/>
    </location>
</feature>
<feature type="active site" evidence="1">
    <location>
        <position position="203"/>
    </location>
</feature>
<feature type="active site" evidence="1">
    <location>
        <position position="205"/>
    </location>
</feature>
<gene>
    <name evidence="1" type="primary">purQ</name>
    <name type="ordered locus">Mbar_A2755</name>
</gene>
<organism>
    <name type="scientific">Methanosarcina barkeri (strain Fusaro / DSM 804)</name>
    <dbReference type="NCBI Taxonomy" id="269797"/>
    <lineage>
        <taxon>Archaea</taxon>
        <taxon>Methanobacteriati</taxon>
        <taxon>Methanobacteriota</taxon>
        <taxon>Stenosarchaea group</taxon>
        <taxon>Methanomicrobia</taxon>
        <taxon>Methanosarcinales</taxon>
        <taxon>Methanosarcinaceae</taxon>
        <taxon>Methanosarcina</taxon>
    </lineage>
</organism>
<keyword id="KW-0067">ATP-binding</keyword>
<keyword id="KW-0963">Cytoplasm</keyword>
<keyword id="KW-0315">Glutamine amidotransferase</keyword>
<keyword id="KW-0378">Hydrolase</keyword>
<keyword id="KW-0436">Ligase</keyword>
<keyword id="KW-0547">Nucleotide-binding</keyword>
<keyword id="KW-0658">Purine biosynthesis</keyword>
<proteinExistence type="inferred from homology"/>
<evidence type="ECO:0000255" key="1">
    <source>
        <dbReference type="HAMAP-Rule" id="MF_00421"/>
    </source>
</evidence>